<feature type="chain" id="PRO_0000100714" description="POU domain, class 2, transcription factor 2">
    <location>
        <begin position="1"/>
        <end position="479"/>
    </location>
</feature>
<feature type="domain" description="POU-specific" evidence="4">
    <location>
        <begin position="195"/>
        <end position="269"/>
    </location>
</feature>
<feature type="DNA-binding region" description="Homeobox" evidence="3">
    <location>
        <begin position="297"/>
        <end position="356"/>
    </location>
</feature>
<feature type="region of interest" description="Disordered" evidence="5">
    <location>
        <begin position="1"/>
        <end position="86"/>
    </location>
</feature>
<feature type="region of interest" description="Disordered" evidence="5">
    <location>
        <begin position="166"/>
        <end position="200"/>
    </location>
</feature>
<feature type="region of interest" description="Disordered" evidence="5">
    <location>
        <begin position="275"/>
        <end position="298"/>
    </location>
</feature>
<feature type="region of interest" description="Disordered" evidence="5">
    <location>
        <begin position="357"/>
        <end position="393"/>
    </location>
</feature>
<feature type="region of interest" description="Leucine-zipper">
    <location>
        <begin position="389"/>
        <end position="410"/>
    </location>
</feature>
<feature type="region of interest" description="Disordered" evidence="5">
    <location>
        <begin position="409"/>
        <end position="479"/>
    </location>
</feature>
<feature type="compositionally biased region" description="Basic and acidic residues" evidence="5">
    <location>
        <begin position="12"/>
        <end position="37"/>
    </location>
</feature>
<feature type="compositionally biased region" description="Polar residues" evidence="5">
    <location>
        <begin position="38"/>
        <end position="60"/>
    </location>
</feature>
<feature type="compositionally biased region" description="Pro residues" evidence="5">
    <location>
        <begin position="76"/>
        <end position="85"/>
    </location>
</feature>
<feature type="compositionally biased region" description="Low complexity" evidence="5">
    <location>
        <begin position="275"/>
        <end position="288"/>
    </location>
</feature>
<feature type="compositionally biased region" description="Gly residues" evidence="5">
    <location>
        <begin position="416"/>
        <end position="425"/>
    </location>
</feature>
<feature type="splice variant" id="VSP_002324" description="In isoform 3 and isoform 4." evidence="13 15 17">
    <location>
        <begin position="168"/>
        <end position="183"/>
    </location>
</feature>
<feature type="splice variant" id="VSP_007848" description="In isoform 4." evidence="13 17">
    <original>VTTLSSAVGTLHPSRTA</original>
    <variation>AQTPALKAATRLSACQA</variation>
    <location>
        <begin position="400"/>
        <end position="416"/>
    </location>
</feature>
<feature type="splice variant" id="VSP_007849" description="In isoform 4." evidence="13 17">
    <location>
        <begin position="417"/>
        <end position="479"/>
    </location>
</feature>
<feature type="splice variant" id="VSP_002325" description="In isoform 2." evidence="16">
    <location>
        <begin position="468"/>
        <end position="479"/>
    </location>
</feature>
<feature type="splice variant" id="VSP_032187" description="In isoform 5." evidence="14">
    <original>PGLWWNPAPYQP</original>
    <variation>STMVGLSSGLSPALMSNNPLATIQALASGGTLPLTSLDGSGNLVLGAAGAAPGSPSLVTSPLFLNHTGLPLLSAPPGVGLVSAAAAAVAASISSKSPGLSSSSSSSSSSSSSTCSDVAAQTPGGPGGPEAGSKAE</variation>
    <location>
        <begin position="468"/>
        <end position="479"/>
    </location>
</feature>
<feature type="mutagenesis site" description="Suppresses DNA-binding ability.">
    <original>VIR</original>
    <variation>FNP</variation>
    <location>
        <begin position="340"/>
        <end position="342"/>
    </location>
</feature>
<feature type="helix" evidence="21">
    <location>
        <begin position="197"/>
        <end position="216"/>
    </location>
</feature>
<feature type="helix" evidence="21">
    <location>
        <begin position="221"/>
        <end position="232"/>
    </location>
</feature>
<feature type="helix" evidence="21">
    <location>
        <begin position="238"/>
        <end position="246"/>
    </location>
</feature>
<feature type="helix" evidence="21">
    <location>
        <begin position="251"/>
        <end position="274"/>
    </location>
</feature>
<feature type="helix" evidence="21">
    <location>
        <begin position="306"/>
        <end position="318"/>
    </location>
</feature>
<feature type="helix" evidence="21">
    <location>
        <begin position="324"/>
        <end position="334"/>
    </location>
</feature>
<feature type="helix" evidence="21">
    <location>
        <begin position="338"/>
        <end position="352"/>
    </location>
</feature>
<feature type="turn" evidence="20">
    <location>
        <begin position="356"/>
        <end position="358"/>
    </location>
</feature>
<reference key="1">
    <citation type="journal article" date="1988" name="Genes Dev.">
        <title>The B-cell-specific Oct-2 protein contains POU box- and homeo box-type domains.</title>
        <authorList>
            <person name="Clerc R.G."/>
            <person name="Corcoran L.M."/>
            <person name="Lebowitz J.H."/>
            <person name="Baltimore D."/>
            <person name="Sharp P.A."/>
        </authorList>
    </citation>
    <scope>NUCLEOTIDE SEQUENCE [MRNA] (ISOFORM 2)</scope>
    <scope>NUCLEOTIDE SEQUENCE [MRNA] OF 450-479 (ISOFORM 1)</scope>
</reference>
<reference key="2">
    <citation type="journal article" date="1988" name="Nature">
        <title>A human lymphoid-specific transcription factor that activates immunoglobulin genes is a homoeobox protein.</title>
        <authorList>
            <person name="Scheidereit C."/>
            <person name="Cromlish J.A."/>
            <person name="Gerster T."/>
            <person name="Kawakami K."/>
            <person name="Balmaceda C.-G."/>
            <person name="Currie R.A."/>
            <person name="Roder R.G."/>
        </authorList>
    </citation>
    <scope>NUCLEOTIDE SEQUENCE [MRNA] (ISOFORM 3)</scope>
    <scope>FUNCTION</scope>
    <scope>TISSUE SPECIFICITY</scope>
    <source>
        <tissue>B-cell lymphoma</tissue>
    </source>
</reference>
<reference key="3">
    <citation type="submission" date="2003-05" db="EMBL/GenBank/DDBJ databases">
        <title>Cloning of human full-length CDSs in BD Creator(TM) system donor vector.</title>
        <authorList>
            <person name="Kalnine N."/>
            <person name="Chen X."/>
            <person name="Rolfs A."/>
            <person name="Halleck A."/>
            <person name="Hines L."/>
            <person name="Eisenstein S."/>
            <person name="Koundinya M."/>
            <person name="Raphael J."/>
            <person name="Moreira D."/>
            <person name="Kelley T."/>
            <person name="LaBaer J."/>
            <person name="Lin Y."/>
            <person name="Phelan M."/>
            <person name="Farmer A."/>
        </authorList>
    </citation>
    <scope>NUCLEOTIDE SEQUENCE [LARGE SCALE MRNA] (ISOFORM 4)</scope>
</reference>
<reference key="4">
    <citation type="journal article" date="2004" name="Genome Res.">
        <title>The status, quality, and expansion of the NIH full-length cDNA project: the Mammalian Gene Collection (MGC).</title>
        <authorList>
            <consortium name="The MGC Project Team"/>
        </authorList>
    </citation>
    <scope>NUCLEOTIDE SEQUENCE [LARGE SCALE MRNA] (ISOFORM 4)</scope>
    <source>
        <tissue>Lymph</tissue>
    </source>
</reference>
<reference key="5">
    <citation type="journal article" date="1988" name="Nature">
        <title>A cloned octamer transcription factor stimulates transcription from lymphoid-specific promoters in non-B cells.</title>
        <authorList>
            <person name="Mueller M.M."/>
            <person name="Ruppert S."/>
            <person name="Schaffner W."/>
            <person name="Matthias P."/>
        </authorList>
    </citation>
    <scope>NUCLEOTIDE SEQUENCE [MRNA] OF 2-479 (ISOFORM 1)</scope>
    <source>
        <tissue>B-cell</tissue>
    </source>
</reference>
<reference key="6">
    <citation type="journal article" date="1990" name="EMBO J.">
        <title>Transcription factor Oct-2A contains functionally redundant activating domains and works selectively from a promoter but not from a remote enhancer position in non-lymphoid (HeLa) cells.</title>
        <authorList>
            <person name="Muller-Immergluck M.M."/>
            <person name="Schaffner W."/>
            <person name="Matthias P."/>
        </authorList>
    </citation>
    <scope>NUCLEOTIDE SEQUENCE [MRNA] OF 99-161</scope>
    <scope>FUNCTION</scope>
</reference>
<reference key="7">
    <citation type="journal article" date="1994" name="Biol. Chem. Hoppe-Seyler">
        <title>Short introns interrupting the Oct-2 POU domain may prevent recombination between POU family genes without interfering with potential POU domain 'shuffling' in evolution.</title>
        <authorList>
            <person name="Matsuo K."/>
            <person name="Clay O."/>
            <person name="Kuenzler P."/>
            <person name="Georgiev O."/>
            <person name="Urbanek P."/>
            <person name="Schaffner W."/>
        </authorList>
    </citation>
    <scope>NUCLEOTIDE SEQUENCE [GENOMIC DNA] OF 168-377</scope>
</reference>
<reference key="8">
    <citation type="journal article" date="1988" name="Cell">
        <title>A human protein specific for the immunoglobulin octamer DNA motif contains a functional homeobox domain.</title>
        <authorList>
            <person name="Ko H.-S."/>
            <person name="Fast P."/>
            <person name="McBride W."/>
            <person name="Staudt L.M."/>
        </authorList>
    </citation>
    <scope>NUCLEOTIDE SEQUENCE [MRNA] OF 240-387</scope>
    <scope>FUNCTION</scope>
</reference>
<reference key="9">
    <citation type="journal article" date="1992" name="Cell">
        <title>Promoter-selective activation domains in Oct-1 and Oct-2 direct differential activation of an snRNA and mRNA promoter.</title>
        <authorList>
            <person name="Tanaka M."/>
            <person name="Lai J.-S."/>
            <person name="Herr W."/>
        </authorList>
    </citation>
    <scope>NUCLEOTIDE SEQUENCE [MRNA] OF 468-479 (ISOFORM 5)</scope>
    <scope>FUNCTION</scope>
</reference>
<reference key="10">
    <citation type="journal article" date="1988" name="EMBO J.">
        <title>Identification of a novel lymphoid specific octamer binding protein (OTF-2B) by proteolytic clipping bandshift assay (PCBA).</title>
        <authorList>
            <person name="Schreiber E."/>
            <person name="Matthias P."/>
            <person name="Mueller M.M."/>
            <person name="Schaffner W."/>
        </authorList>
    </citation>
    <scope>IDENTIFICATION (ISOFORM 5)</scope>
    <scope>TISSUE SPECIFICITY</scope>
</reference>
<reference key="11">
    <citation type="journal article" date="1995" name="Cell">
        <title>OBF-1, a novel B cell-specific coactivator that stimulates immunoglobulin promoter activity through association with octamer-binding proteins.</title>
        <authorList>
            <person name="Strubin M."/>
            <person name="Newell J.W."/>
            <person name="Matthias P."/>
        </authorList>
    </citation>
    <scope>FUNCTION</scope>
    <scope>INTERACTION WITH POU2AF1</scope>
    <scope>DNA-BINDING</scope>
    <source>
        <tissue>Spleen</tissue>
    </source>
</reference>
<reference key="12">
    <citation type="journal article" date="1999" name="J. Biol. Chem.">
        <title>Selective binding of steroid hormone receptors to octamer transcription factors determines transcriptional synergism at the mouse mammary tumor virus promoter.</title>
        <authorList>
            <person name="Prefontaine G.G."/>
            <person name="Walther R."/>
            <person name="Giffin W."/>
            <person name="Lemieux M.E."/>
            <person name="Pope L."/>
            <person name="Hache R.J.G."/>
        </authorList>
    </citation>
    <scope>INTERACTION WITH NR3C1; AR AND PGR</scope>
</reference>
<reference key="13">
    <citation type="journal article" date="1994" name="Biochemistry">
        <title>Solution structure of a POU-specific homeodomain: 3D-NMR studies of human B-cell transcription factor Oct-2.</title>
        <authorList>
            <person name="Sivaraja M."/>
            <person name="Botfield M.C."/>
            <person name="Mueller M."/>
            <person name="Jancso A."/>
            <person name="Weiss M.A."/>
        </authorList>
    </citation>
    <scope>STRUCTURE BY NMR OF 297-359</scope>
</reference>
<accession>P09086</accession>
<accession>Q16648</accession>
<accession>Q7M4M8</accession>
<accession>Q9BRS4</accession>
<gene>
    <name evidence="19" type="primary">POU2F2</name>
    <name type="synonym">OCT2</name>
    <name type="synonym">OTF2</name>
</gene>
<evidence type="ECO:0000250" key="1"/>
<evidence type="ECO:0000250" key="2">
    <source>
        <dbReference type="UniProtKB" id="Q00196"/>
    </source>
</evidence>
<evidence type="ECO:0000255" key="3">
    <source>
        <dbReference type="PROSITE-ProRule" id="PRU00108"/>
    </source>
</evidence>
<evidence type="ECO:0000255" key="4">
    <source>
        <dbReference type="PROSITE-ProRule" id="PRU00530"/>
    </source>
</evidence>
<evidence type="ECO:0000256" key="5">
    <source>
        <dbReference type="SAM" id="MobiDB-lite"/>
    </source>
</evidence>
<evidence type="ECO:0000269" key="6">
    <source>
    </source>
</evidence>
<evidence type="ECO:0000269" key="7">
    <source>
    </source>
</evidence>
<evidence type="ECO:0000269" key="8">
    <source>
    </source>
</evidence>
<evidence type="ECO:0000269" key="9">
    <source>
    </source>
</evidence>
<evidence type="ECO:0000269" key="10">
    <source>
    </source>
</evidence>
<evidence type="ECO:0000269" key="11">
    <source>
    </source>
</evidence>
<evidence type="ECO:0000269" key="12">
    <source>
    </source>
</evidence>
<evidence type="ECO:0000303" key="13">
    <source>
    </source>
</evidence>
<evidence type="ECO:0000303" key="14">
    <source>
    </source>
</evidence>
<evidence type="ECO:0000303" key="15">
    <source>
    </source>
</evidence>
<evidence type="ECO:0000303" key="16">
    <source>
    </source>
</evidence>
<evidence type="ECO:0000303" key="17">
    <source ref="3"/>
</evidence>
<evidence type="ECO:0000305" key="18"/>
<evidence type="ECO:0000312" key="19">
    <source>
        <dbReference type="HGNC" id="HGNC:9213"/>
    </source>
</evidence>
<evidence type="ECO:0007829" key="20">
    <source>
        <dbReference type="PDB" id="1HDP"/>
    </source>
</evidence>
<evidence type="ECO:0007829" key="21">
    <source>
        <dbReference type="PDB" id="9DZM"/>
    </source>
</evidence>
<organism>
    <name type="scientific">Homo sapiens</name>
    <name type="common">Human</name>
    <dbReference type="NCBI Taxonomy" id="9606"/>
    <lineage>
        <taxon>Eukaryota</taxon>
        <taxon>Metazoa</taxon>
        <taxon>Chordata</taxon>
        <taxon>Craniata</taxon>
        <taxon>Vertebrata</taxon>
        <taxon>Euteleostomi</taxon>
        <taxon>Mammalia</taxon>
        <taxon>Eutheria</taxon>
        <taxon>Euarchontoglires</taxon>
        <taxon>Primates</taxon>
        <taxon>Haplorrhini</taxon>
        <taxon>Catarrhini</taxon>
        <taxon>Hominidae</taxon>
        <taxon>Homo</taxon>
    </lineage>
</organism>
<name>PO2F2_HUMAN</name>
<sequence>MVHSSMGAPEIRMSKPLEAEKQGLDSPSEHTDTERNGPDTNHQNPQNKTSPFSVSPTGPSTKIKAEDPSGDSAPAAPLPPQPAQPHLPQAQLMLTGSQLAGDIQQLLQLQQLVLVPGHHLQPPAQFLLPQAQQSQPGLLPTPNLFQLPQQTQGALLTSQPRAGLPTQAVTRPTLPDPHLSHPQPPKCLEPPSHPEEPSDLEELEQFARTFKQRRIKLGFTQGDVGLAMGKLYGNDFSQTTISRFEALNLSFKNMCKLKPLLEKWLNDAETMSVDSSLPSPNQLSSPSLGFDGLPGRRRKKRTSIETNVRFALEKSFLANQKPTSEEILLIAEQLHMEKEVIRVWFCNRRQKEKRINPCSAAPMLPSPGKPASYSPHMVTPQGGAGTLPLSQASSSLSTTVTTLSSAVGTLHPSRTAGGGGGGGGAAPPLNSIPSVTPPPPATTNSTNPSPQGSHSAIGLSGLNPSTGPGLWWNPAPYQP</sequence>
<comment type="function">
    <text evidence="2 6 8 9 10 12">Transcription factor that specifically binds to the octamer motif (5'-ATTTGCAT-3') (PubMed:2904654, PubMed:7859290). Regulates IL6 expression in B cells with POU2AF1 (By similarity). Regulates transcription in a number of tissues in addition to activating immunoglobulin gene expression (PubMed:2901913, PubMed:2904654). Modulates transcription transactivation by NR3C1, AR and PGR (PubMed:10480874).</text>
</comment>
<comment type="function">
    <molecule>Isoform 5</molecule>
    <text evidence="7">Activates the U2 small nuclear RNA (snRNA) promoter.</text>
</comment>
<comment type="activity regulation">
    <text evidence="2">Transactivation activity is enhanced by transcriptional coactivator POU2AF1.</text>
</comment>
<comment type="subunit">
    <text evidence="6 12">Interacts with NR3C1, AR and PGR (PubMed:10480874). Interacts with POU2AF1; the interaction increases POU2F2 transactivation activity (PubMed:7859290).</text>
</comment>
<comment type="interaction">
    <interactant intactId="EBI-12918396">
        <id>P09086-4</id>
    </interactant>
    <interactant intactId="EBI-6447480">
        <id>P35548</id>
        <label>MSX2</label>
    </interactant>
    <organismsDiffer>false</organismsDiffer>
    <experiments>3</experiments>
</comment>
<comment type="subcellular location">
    <subcellularLocation>
        <location evidence="1">Cytoplasm</location>
    </subcellularLocation>
    <subcellularLocation>
        <location>Nucleus</location>
    </subcellularLocation>
</comment>
<comment type="alternative products">
    <event type="alternative splicing"/>
    <isoform>
        <id>P09086-1</id>
        <name>1</name>
        <sequence type="displayed"/>
    </isoform>
    <isoform>
        <id>P09086-2</id>
        <name>2</name>
        <sequence type="described" ref="VSP_002325"/>
    </isoform>
    <isoform>
        <id>P09086-3</id>
        <name>3</name>
        <sequence type="described" ref="VSP_002324"/>
    </isoform>
    <isoform>
        <id>P09086-4</id>
        <name>4</name>
        <sequence type="described" ref="VSP_002324 VSP_007848 VSP_007849"/>
    </isoform>
    <isoform>
        <id>P09086-5</id>
        <name>5</name>
        <name>Oct-2B</name>
        <sequence type="described" ref="VSP_032187"/>
    </isoform>
</comment>
<comment type="tissue specificity">
    <text evidence="10 11">Isoform 3 is B-cell specific. Isoform 5 is expressed in B-cells and the immunoglobulin-expressing T-cell line MOLT-4, but not in the T-cell line BW5147.</text>
</comment>
<comment type="miscellaneous">
    <molecule>Isoform 5</molecule>
    <text evidence="18">Incomplete sequence.</text>
</comment>
<comment type="similarity">
    <text evidence="18">Belongs to the POU transcription factor family. Class-2 subfamily.</text>
</comment>
<comment type="sequence caution" evidence="18">
    <conflict type="erroneous initiation">
        <sequence resource="EMBL-CDS" id="CAA32039"/>
    </conflict>
    <text>Truncated N-terminus.</text>
</comment>
<dbReference type="EMBL" id="M36653">
    <property type="protein sequence ID" value="AAA36389.1"/>
    <property type="molecule type" value="mRNA"/>
</dbReference>
<dbReference type="EMBL" id="X53468">
    <property type="protein sequence ID" value="CAA37562.1"/>
    <property type="molecule type" value="mRNA"/>
</dbReference>
<dbReference type="EMBL" id="X53469">
    <property type="protein sequence ID" value="CAA37565.1"/>
    <property type="molecule type" value="mRNA"/>
</dbReference>
<dbReference type="EMBL" id="M36542">
    <property type="protein sequence ID" value="AAA36732.1"/>
    <property type="molecule type" value="mRNA"/>
</dbReference>
<dbReference type="EMBL" id="X13810">
    <property type="protein sequence ID" value="CAA32040.1"/>
    <property type="molecule type" value="mRNA"/>
</dbReference>
<dbReference type="EMBL" id="BT007438">
    <property type="protein sequence ID" value="AAP36106.1"/>
    <property type="molecule type" value="mRNA"/>
</dbReference>
<dbReference type="EMBL" id="BC006101">
    <property type="protein sequence ID" value="AAH06101.1"/>
    <property type="molecule type" value="mRNA"/>
</dbReference>
<dbReference type="EMBL" id="M36718">
    <property type="protein sequence ID" value="AAA59978.1"/>
    <property type="molecule type" value="mRNA"/>
</dbReference>
<dbReference type="EMBL" id="X13809">
    <property type="protein sequence ID" value="CAA32039.1"/>
    <property type="status" value="ALT_INIT"/>
    <property type="molecule type" value="mRNA"/>
</dbReference>
<dbReference type="EMBL" id="X81030">
    <property type="protein sequence ID" value="CAA56933.1"/>
    <property type="molecule type" value="Genomic_DNA"/>
</dbReference>
<dbReference type="CCDS" id="CCDS33035.1">
    <molecule id="P09086-3"/>
</dbReference>
<dbReference type="CCDS" id="CCDS56094.1">
    <molecule id="P09086-2"/>
</dbReference>
<dbReference type="CCDS" id="CCDS56095.1">
    <molecule id="P09086-1"/>
</dbReference>
<dbReference type="CCDS" id="CCDS58665.1">
    <molecule id="P09086-4"/>
</dbReference>
<dbReference type="PIR" id="A31753">
    <property type="entry name" value="A31753"/>
</dbReference>
<dbReference type="PIR" id="A42098">
    <property type="entry name" value="A42098"/>
</dbReference>
<dbReference type="RefSeq" id="NP_001193954.1">
    <molecule id="P09086-1"/>
    <property type="nucleotide sequence ID" value="NM_001207025.4"/>
</dbReference>
<dbReference type="RefSeq" id="NP_001193955.1">
    <molecule id="P09086-2"/>
    <property type="nucleotide sequence ID" value="NM_001207026.3"/>
</dbReference>
<dbReference type="RefSeq" id="NP_001234923.1">
    <molecule id="P09086-4"/>
    <property type="nucleotide sequence ID" value="NM_001247994.3"/>
</dbReference>
<dbReference type="RefSeq" id="NP_002689.1">
    <molecule id="P09086-3"/>
    <property type="nucleotide sequence ID" value="NM_002698.6"/>
</dbReference>
<dbReference type="PDB" id="1HDP">
    <property type="method" value="NMR"/>
    <property type="chains" value="A=297-359"/>
</dbReference>
<dbReference type="PDB" id="9DZM">
    <property type="method" value="X-ray"/>
    <property type="resolution" value="2.54 A"/>
    <property type="chains" value="C/D/E/F=195-357"/>
</dbReference>
<dbReference type="PDBsum" id="1HDP"/>
<dbReference type="PDBsum" id="9DZM"/>
<dbReference type="SMR" id="P09086"/>
<dbReference type="BioGRID" id="111448">
    <property type="interactions" value="27"/>
</dbReference>
<dbReference type="CORUM" id="P09086"/>
<dbReference type="DIP" id="DIP-51N"/>
<dbReference type="FunCoup" id="P09086">
    <property type="interactions" value="1795"/>
</dbReference>
<dbReference type="IntAct" id="P09086">
    <property type="interactions" value="10"/>
</dbReference>
<dbReference type="MINT" id="P09086"/>
<dbReference type="STRING" id="9606.ENSP00000431603"/>
<dbReference type="BindingDB" id="P09086"/>
<dbReference type="ChEMBL" id="CHEMBL3509582"/>
<dbReference type="DrugBank" id="DB11799">
    <property type="generic name" value="Bictegravir"/>
</dbReference>
<dbReference type="DrugBank" id="DB12500">
    <property type="generic name" value="Fedratinib"/>
</dbReference>
<dbReference type="DrugBank" id="DB11757">
    <property type="generic name" value="Istradefylline"/>
</dbReference>
<dbReference type="DrugBank" id="DB01203">
    <property type="generic name" value="Nadolol"/>
</dbReference>
<dbReference type="GlyGen" id="P09086">
    <property type="glycosylation" value="2 sites, 1 O-linked glycan (1 site)"/>
</dbReference>
<dbReference type="iPTMnet" id="P09086"/>
<dbReference type="PhosphoSitePlus" id="P09086"/>
<dbReference type="BioMuta" id="POU2F2"/>
<dbReference type="DMDM" id="123402"/>
<dbReference type="jPOST" id="P09086"/>
<dbReference type="MassIVE" id="P09086"/>
<dbReference type="PaxDb" id="9606-ENSP00000431603"/>
<dbReference type="PeptideAtlas" id="P09086"/>
<dbReference type="ProteomicsDB" id="52192">
    <molecule id="P09086-1"/>
</dbReference>
<dbReference type="ProteomicsDB" id="52193">
    <molecule id="P09086-2"/>
</dbReference>
<dbReference type="ProteomicsDB" id="52194">
    <molecule id="P09086-3"/>
</dbReference>
<dbReference type="ProteomicsDB" id="52195">
    <molecule id="P09086-4"/>
</dbReference>
<dbReference type="ProteomicsDB" id="52196">
    <molecule id="P09086-5"/>
</dbReference>
<dbReference type="Pumba" id="P09086"/>
<dbReference type="Antibodypedia" id="3745">
    <property type="antibodies" value="596 antibodies from 43 providers"/>
</dbReference>
<dbReference type="DNASU" id="5452"/>
<dbReference type="Ensembl" id="ENST00000389341.9">
    <molecule id="P09086-3"/>
    <property type="protein sequence ID" value="ENSP00000373992.3"/>
    <property type="gene ID" value="ENSG00000028277.22"/>
</dbReference>
<dbReference type="Ensembl" id="ENST00000526816.6">
    <molecule id="P09086-1"/>
    <property type="protein sequence ID" value="ENSP00000431603.3"/>
    <property type="gene ID" value="ENSG00000028277.22"/>
</dbReference>
<dbReference type="Ensembl" id="ENST00000529067.5">
    <molecule id="P09086-4"/>
    <property type="protein sequence ID" value="ENSP00000437224.1"/>
    <property type="gene ID" value="ENSG00000028277.22"/>
</dbReference>
<dbReference type="Ensembl" id="ENST00000529952.5">
    <molecule id="P09086-2"/>
    <property type="protein sequence ID" value="ENSP00000436988.1"/>
    <property type="gene ID" value="ENSG00000028277.22"/>
</dbReference>
<dbReference type="GeneID" id="5452"/>
<dbReference type="KEGG" id="hsa:5452"/>
<dbReference type="UCSC" id="uc002osn.4">
    <molecule id="P09086-1"/>
    <property type="organism name" value="human"/>
</dbReference>
<dbReference type="AGR" id="HGNC:9213"/>
<dbReference type="CTD" id="5452"/>
<dbReference type="DisGeNET" id="5452"/>
<dbReference type="GeneCards" id="POU2F2"/>
<dbReference type="HGNC" id="HGNC:9213">
    <property type="gene designation" value="POU2F2"/>
</dbReference>
<dbReference type="HPA" id="ENSG00000028277">
    <property type="expression patterns" value="Tissue enhanced (lymphoid)"/>
</dbReference>
<dbReference type="MIM" id="164176">
    <property type="type" value="gene"/>
</dbReference>
<dbReference type="neXtProt" id="NX_P09086"/>
<dbReference type="OpenTargets" id="ENSG00000028277"/>
<dbReference type="PharmGKB" id="PA33537"/>
<dbReference type="VEuPathDB" id="HostDB:ENSG00000028277"/>
<dbReference type="eggNOG" id="KOG3802">
    <property type="taxonomic scope" value="Eukaryota"/>
</dbReference>
<dbReference type="GeneTree" id="ENSGT00940000160115"/>
<dbReference type="InParanoid" id="P09086"/>
<dbReference type="OrthoDB" id="6358449at2759"/>
<dbReference type="PAN-GO" id="P09086">
    <property type="GO annotations" value="3 GO annotations based on evolutionary models"/>
</dbReference>
<dbReference type="PhylomeDB" id="P09086"/>
<dbReference type="TreeFam" id="TF316413"/>
<dbReference type="PathwayCommons" id="P09086"/>
<dbReference type="Reactome" id="R-HSA-6807505">
    <property type="pathway name" value="RNA polymerase II transcribes snRNA genes"/>
</dbReference>
<dbReference type="SignaLink" id="P09086"/>
<dbReference type="SIGNOR" id="P09086"/>
<dbReference type="BioGRID-ORCS" id="5452">
    <property type="hits" value="22 hits in 1175 CRISPR screens"/>
</dbReference>
<dbReference type="ChiTaRS" id="POU2F2">
    <property type="organism name" value="human"/>
</dbReference>
<dbReference type="EvolutionaryTrace" id="P09086"/>
<dbReference type="GenomeRNAi" id="5452"/>
<dbReference type="Pharos" id="P09086">
    <property type="development level" value="Tbio"/>
</dbReference>
<dbReference type="PRO" id="PR:P09086"/>
<dbReference type="Proteomes" id="UP000005640">
    <property type="component" value="Chromosome 19"/>
</dbReference>
<dbReference type="RNAct" id="P09086">
    <property type="molecule type" value="protein"/>
</dbReference>
<dbReference type="Bgee" id="ENSG00000028277">
    <property type="expression patterns" value="Expressed in monocyte and 190 other cell types or tissues"/>
</dbReference>
<dbReference type="ExpressionAtlas" id="P09086">
    <property type="expression patterns" value="baseline and differential"/>
</dbReference>
<dbReference type="GO" id="GO:0000785">
    <property type="term" value="C:chromatin"/>
    <property type="evidence" value="ECO:0000247"/>
    <property type="project" value="NTNU_SB"/>
</dbReference>
<dbReference type="GO" id="GO:0005737">
    <property type="term" value="C:cytoplasm"/>
    <property type="evidence" value="ECO:0007669"/>
    <property type="project" value="UniProtKB-SubCell"/>
</dbReference>
<dbReference type="GO" id="GO:0043231">
    <property type="term" value="C:intracellular membrane-bounded organelle"/>
    <property type="evidence" value="ECO:0000314"/>
    <property type="project" value="HPA"/>
</dbReference>
<dbReference type="GO" id="GO:0005654">
    <property type="term" value="C:nucleoplasm"/>
    <property type="evidence" value="ECO:0000314"/>
    <property type="project" value="HPA"/>
</dbReference>
<dbReference type="GO" id="GO:0005634">
    <property type="term" value="C:nucleus"/>
    <property type="evidence" value="ECO:0000314"/>
    <property type="project" value="MGI"/>
</dbReference>
<dbReference type="GO" id="GO:0003700">
    <property type="term" value="F:DNA-binding transcription factor activity"/>
    <property type="evidence" value="ECO:0000250"/>
    <property type="project" value="UniProtKB"/>
</dbReference>
<dbReference type="GO" id="GO:0000981">
    <property type="term" value="F:DNA-binding transcription factor activity, RNA polymerase II-specific"/>
    <property type="evidence" value="ECO:0000247"/>
    <property type="project" value="NTNU_SB"/>
</dbReference>
<dbReference type="GO" id="GO:0000978">
    <property type="term" value="F:RNA polymerase II cis-regulatory region sequence-specific DNA binding"/>
    <property type="evidence" value="ECO:0000318"/>
    <property type="project" value="GO_Central"/>
</dbReference>
<dbReference type="GO" id="GO:0043565">
    <property type="term" value="F:sequence-specific DNA binding"/>
    <property type="evidence" value="ECO:0000314"/>
    <property type="project" value="MGI"/>
</dbReference>
<dbReference type="GO" id="GO:1990837">
    <property type="term" value="F:sequence-specific double-stranded DNA binding"/>
    <property type="evidence" value="ECO:0000314"/>
    <property type="project" value="ARUK-UCL"/>
</dbReference>
<dbReference type="GO" id="GO:0000976">
    <property type="term" value="F:transcription cis-regulatory region binding"/>
    <property type="evidence" value="ECO:0000250"/>
    <property type="project" value="UniProtKB"/>
</dbReference>
<dbReference type="GO" id="GO:0098586">
    <property type="term" value="P:cellular response to virus"/>
    <property type="evidence" value="ECO:0000250"/>
    <property type="project" value="UniProtKB"/>
</dbReference>
<dbReference type="GO" id="GO:0006959">
    <property type="term" value="P:humoral immune response"/>
    <property type="evidence" value="ECO:0000304"/>
    <property type="project" value="ProtInc"/>
</dbReference>
<dbReference type="GO" id="GO:0032755">
    <property type="term" value="P:positive regulation of interleukin-6 production"/>
    <property type="evidence" value="ECO:0000250"/>
    <property type="project" value="UniProtKB"/>
</dbReference>
<dbReference type="GO" id="GO:0045944">
    <property type="term" value="P:positive regulation of transcription by RNA polymerase II"/>
    <property type="evidence" value="ECO:0000250"/>
    <property type="project" value="UniProtKB"/>
</dbReference>
<dbReference type="GO" id="GO:0006357">
    <property type="term" value="P:regulation of transcription by RNA polymerase II"/>
    <property type="evidence" value="ECO:0000318"/>
    <property type="project" value="GO_Central"/>
</dbReference>
<dbReference type="CDD" id="cd00086">
    <property type="entry name" value="homeodomain"/>
    <property type="match status" value="1"/>
</dbReference>
<dbReference type="FunFam" id="1.10.10.60:FF:000005">
    <property type="entry name" value="POU domain protein"/>
    <property type="match status" value="1"/>
</dbReference>
<dbReference type="FunFam" id="1.10.260.40:FF:000001">
    <property type="entry name" value="POU domain protein"/>
    <property type="match status" value="1"/>
</dbReference>
<dbReference type="Gene3D" id="1.10.10.60">
    <property type="entry name" value="Homeodomain-like"/>
    <property type="match status" value="1"/>
</dbReference>
<dbReference type="Gene3D" id="1.10.260.40">
    <property type="entry name" value="lambda repressor-like DNA-binding domains"/>
    <property type="match status" value="1"/>
</dbReference>
<dbReference type="InterPro" id="IPR001356">
    <property type="entry name" value="HD"/>
</dbReference>
<dbReference type="InterPro" id="IPR017970">
    <property type="entry name" value="Homeobox_CS"/>
</dbReference>
<dbReference type="InterPro" id="IPR009057">
    <property type="entry name" value="Homeodomain-like_sf"/>
</dbReference>
<dbReference type="InterPro" id="IPR010982">
    <property type="entry name" value="Lambda_DNA-bd_dom_sf"/>
</dbReference>
<dbReference type="InterPro" id="IPR013847">
    <property type="entry name" value="POU"/>
</dbReference>
<dbReference type="InterPro" id="IPR000327">
    <property type="entry name" value="POU_dom"/>
</dbReference>
<dbReference type="InterPro" id="IPR050255">
    <property type="entry name" value="POU_domain_TF"/>
</dbReference>
<dbReference type="InterPro" id="IPR000972">
    <property type="entry name" value="TF_octamer"/>
</dbReference>
<dbReference type="PANTHER" id="PTHR11636">
    <property type="entry name" value="POU DOMAIN"/>
    <property type="match status" value="1"/>
</dbReference>
<dbReference type="PANTHER" id="PTHR11636:SF46">
    <property type="entry name" value="POU DOMAIN, CLASS 2, TRANSCRIPTION FACTOR 2"/>
    <property type="match status" value="1"/>
</dbReference>
<dbReference type="Pfam" id="PF00046">
    <property type="entry name" value="Homeodomain"/>
    <property type="match status" value="1"/>
</dbReference>
<dbReference type="Pfam" id="PF00157">
    <property type="entry name" value="Pou"/>
    <property type="match status" value="1"/>
</dbReference>
<dbReference type="PRINTS" id="PR00029">
    <property type="entry name" value="OCTAMER"/>
</dbReference>
<dbReference type="PRINTS" id="PR00028">
    <property type="entry name" value="POUDOMAIN"/>
</dbReference>
<dbReference type="SMART" id="SM00389">
    <property type="entry name" value="HOX"/>
    <property type="match status" value="1"/>
</dbReference>
<dbReference type="SMART" id="SM00352">
    <property type="entry name" value="POU"/>
    <property type="match status" value="1"/>
</dbReference>
<dbReference type="SUPFAM" id="SSF46689">
    <property type="entry name" value="Homeodomain-like"/>
    <property type="match status" value="1"/>
</dbReference>
<dbReference type="SUPFAM" id="SSF47413">
    <property type="entry name" value="lambda repressor-like DNA-binding domains"/>
    <property type="match status" value="1"/>
</dbReference>
<dbReference type="PROSITE" id="PS00027">
    <property type="entry name" value="HOMEOBOX_1"/>
    <property type="match status" value="1"/>
</dbReference>
<dbReference type="PROSITE" id="PS50071">
    <property type="entry name" value="HOMEOBOX_2"/>
    <property type="match status" value="1"/>
</dbReference>
<dbReference type="PROSITE" id="PS00035">
    <property type="entry name" value="POU_1"/>
    <property type="match status" value="1"/>
</dbReference>
<dbReference type="PROSITE" id="PS00465">
    <property type="entry name" value="POU_2"/>
    <property type="match status" value="1"/>
</dbReference>
<dbReference type="PROSITE" id="PS51179">
    <property type="entry name" value="POU_3"/>
    <property type="match status" value="1"/>
</dbReference>
<protein>
    <recommendedName>
        <fullName evidence="18">POU domain, class 2, transcription factor 2</fullName>
    </recommendedName>
    <alternativeName>
        <fullName>Lymphoid-restricted immunoglobulin octamer-binding protein NF-A2</fullName>
    </alternativeName>
    <alternativeName>
        <fullName>Octamer-binding protein 2</fullName>
        <shortName>Oct-2</shortName>
    </alternativeName>
    <alternativeName>
        <fullName>Octamer-binding transcription factor 2</fullName>
        <shortName>OTF-2</shortName>
    </alternativeName>
</protein>
<keyword id="KW-0002">3D-structure</keyword>
<keyword id="KW-0010">Activator</keyword>
<keyword id="KW-0025">Alternative splicing</keyword>
<keyword id="KW-0963">Cytoplasm</keyword>
<keyword id="KW-0238">DNA-binding</keyword>
<keyword id="KW-0371">Homeobox</keyword>
<keyword id="KW-0539">Nucleus</keyword>
<keyword id="KW-1267">Proteomics identification</keyword>
<keyword id="KW-1185">Reference proteome</keyword>
<keyword id="KW-0804">Transcription</keyword>
<keyword id="KW-0805">Transcription regulation</keyword>
<proteinExistence type="evidence at protein level"/>